<feature type="chain" id="PRO_1000186632" description="7-cyano-7-deazaguanine synthase">
    <location>
        <begin position="1"/>
        <end position="231"/>
    </location>
</feature>
<feature type="binding site" evidence="1">
    <location>
        <begin position="8"/>
        <end position="18"/>
    </location>
    <ligand>
        <name>ATP</name>
        <dbReference type="ChEBI" id="CHEBI:30616"/>
    </ligand>
</feature>
<feature type="binding site" evidence="1">
    <location>
        <position position="188"/>
    </location>
    <ligand>
        <name>Zn(2+)</name>
        <dbReference type="ChEBI" id="CHEBI:29105"/>
    </ligand>
</feature>
<feature type="binding site" evidence="1">
    <location>
        <position position="197"/>
    </location>
    <ligand>
        <name>Zn(2+)</name>
        <dbReference type="ChEBI" id="CHEBI:29105"/>
    </ligand>
</feature>
<feature type="binding site" evidence="1">
    <location>
        <position position="200"/>
    </location>
    <ligand>
        <name>Zn(2+)</name>
        <dbReference type="ChEBI" id="CHEBI:29105"/>
    </ligand>
</feature>
<feature type="binding site" evidence="1">
    <location>
        <position position="203"/>
    </location>
    <ligand>
        <name>Zn(2+)</name>
        <dbReference type="ChEBI" id="CHEBI:29105"/>
    </ligand>
</feature>
<organism>
    <name type="scientific">Salmonella newport (strain SL254)</name>
    <dbReference type="NCBI Taxonomy" id="423368"/>
    <lineage>
        <taxon>Bacteria</taxon>
        <taxon>Pseudomonadati</taxon>
        <taxon>Pseudomonadota</taxon>
        <taxon>Gammaproteobacteria</taxon>
        <taxon>Enterobacterales</taxon>
        <taxon>Enterobacteriaceae</taxon>
        <taxon>Salmonella</taxon>
    </lineage>
</organism>
<name>QUEC_SALNS</name>
<evidence type="ECO:0000255" key="1">
    <source>
        <dbReference type="HAMAP-Rule" id="MF_01633"/>
    </source>
</evidence>
<dbReference type="EC" id="6.3.4.20" evidence="1"/>
<dbReference type="EMBL" id="CP001113">
    <property type="protein sequence ID" value="ACF64397.1"/>
    <property type="molecule type" value="Genomic_DNA"/>
</dbReference>
<dbReference type="RefSeq" id="WP_000817210.1">
    <property type="nucleotide sequence ID" value="NZ_CCMR01000003.1"/>
</dbReference>
<dbReference type="SMR" id="B4SWU8"/>
<dbReference type="KEGG" id="see:SNSL254_A0504"/>
<dbReference type="HOGENOM" id="CLU_081854_0_0_6"/>
<dbReference type="UniPathway" id="UPA00391"/>
<dbReference type="Proteomes" id="UP000008824">
    <property type="component" value="Chromosome"/>
</dbReference>
<dbReference type="GO" id="GO:0005524">
    <property type="term" value="F:ATP binding"/>
    <property type="evidence" value="ECO:0007669"/>
    <property type="project" value="UniProtKB-UniRule"/>
</dbReference>
<dbReference type="GO" id="GO:0016879">
    <property type="term" value="F:ligase activity, forming carbon-nitrogen bonds"/>
    <property type="evidence" value="ECO:0007669"/>
    <property type="project" value="UniProtKB-UniRule"/>
</dbReference>
<dbReference type="GO" id="GO:0008270">
    <property type="term" value="F:zinc ion binding"/>
    <property type="evidence" value="ECO:0007669"/>
    <property type="project" value="UniProtKB-UniRule"/>
</dbReference>
<dbReference type="GO" id="GO:0008616">
    <property type="term" value="P:queuosine biosynthetic process"/>
    <property type="evidence" value="ECO:0007669"/>
    <property type="project" value="UniProtKB-UniRule"/>
</dbReference>
<dbReference type="CDD" id="cd01995">
    <property type="entry name" value="QueC-like"/>
    <property type="match status" value="1"/>
</dbReference>
<dbReference type="FunFam" id="3.40.50.620:FF:000017">
    <property type="entry name" value="7-cyano-7-deazaguanine synthase"/>
    <property type="match status" value="1"/>
</dbReference>
<dbReference type="Gene3D" id="3.40.50.620">
    <property type="entry name" value="HUPs"/>
    <property type="match status" value="1"/>
</dbReference>
<dbReference type="HAMAP" id="MF_01633">
    <property type="entry name" value="QueC"/>
    <property type="match status" value="1"/>
</dbReference>
<dbReference type="InterPro" id="IPR018317">
    <property type="entry name" value="QueC"/>
</dbReference>
<dbReference type="InterPro" id="IPR014729">
    <property type="entry name" value="Rossmann-like_a/b/a_fold"/>
</dbReference>
<dbReference type="NCBIfam" id="TIGR00364">
    <property type="entry name" value="7-cyano-7-deazaguanine synthase QueC"/>
    <property type="match status" value="1"/>
</dbReference>
<dbReference type="NCBIfam" id="NF008317">
    <property type="entry name" value="PRK11106.1"/>
    <property type="match status" value="1"/>
</dbReference>
<dbReference type="PANTHER" id="PTHR42914">
    <property type="entry name" value="7-CYANO-7-DEAZAGUANINE SYNTHASE"/>
    <property type="match status" value="1"/>
</dbReference>
<dbReference type="PANTHER" id="PTHR42914:SF1">
    <property type="entry name" value="7-CYANO-7-DEAZAGUANINE SYNTHASE"/>
    <property type="match status" value="1"/>
</dbReference>
<dbReference type="Pfam" id="PF06508">
    <property type="entry name" value="QueC"/>
    <property type="match status" value="1"/>
</dbReference>
<dbReference type="PIRSF" id="PIRSF006293">
    <property type="entry name" value="ExsB"/>
    <property type="match status" value="1"/>
</dbReference>
<dbReference type="SUPFAM" id="SSF52402">
    <property type="entry name" value="Adenine nucleotide alpha hydrolases-like"/>
    <property type="match status" value="1"/>
</dbReference>
<comment type="function">
    <text evidence="1">Catalyzes the ATP-dependent conversion of 7-carboxy-7-deazaguanine (CDG) to 7-cyano-7-deazaguanine (preQ(0)).</text>
</comment>
<comment type="catalytic activity">
    <reaction evidence="1">
        <text>7-carboxy-7-deazaguanine + NH4(+) + ATP = 7-cyano-7-deazaguanine + ADP + phosphate + H2O + H(+)</text>
        <dbReference type="Rhea" id="RHEA:27982"/>
        <dbReference type="ChEBI" id="CHEBI:15377"/>
        <dbReference type="ChEBI" id="CHEBI:15378"/>
        <dbReference type="ChEBI" id="CHEBI:28938"/>
        <dbReference type="ChEBI" id="CHEBI:30616"/>
        <dbReference type="ChEBI" id="CHEBI:43474"/>
        <dbReference type="ChEBI" id="CHEBI:45075"/>
        <dbReference type="ChEBI" id="CHEBI:61036"/>
        <dbReference type="ChEBI" id="CHEBI:456216"/>
        <dbReference type="EC" id="6.3.4.20"/>
    </reaction>
</comment>
<comment type="cofactor">
    <cofactor evidence="1">
        <name>Zn(2+)</name>
        <dbReference type="ChEBI" id="CHEBI:29105"/>
    </cofactor>
    <text evidence="1">Binds 1 zinc ion per subunit.</text>
</comment>
<comment type="pathway">
    <text evidence="1">Purine metabolism; 7-cyano-7-deazaguanine biosynthesis.</text>
</comment>
<comment type="similarity">
    <text evidence="1">Belongs to the QueC family.</text>
</comment>
<keyword id="KW-0067">ATP-binding</keyword>
<keyword id="KW-0436">Ligase</keyword>
<keyword id="KW-0479">Metal-binding</keyword>
<keyword id="KW-0547">Nucleotide-binding</keyword>
<keyword id="KW-0671">Queuosine biosynthesis</keyword>
<keyword id="KW-0862">Zinc</keyword>
<reference key="1">
    <citation type="journal article" date="2011" name="J. Bacteriol.">
        <title>Comparative genomics of 28 Salmonella enterica isolates: evidence for CRISPR-mediated adaptive sublineage evolution.</title>
        <authorList>
            <person name="Fricke W.F."/>
            <person name="Mammel M.K."/>
            <person name="McDermott P.F."/>
            <person name="Tartera C."/>
            <person name="White D.G."/>
            <person name="Leclerc J.E."/>
            <person name="Ravel J."/>
            <person name="Cebula T.A."/>
        </authorList>
    </citation>
    <scope>NUCLEOTIDE SEQUENCE [LARGE SCALE GENOMIC DNA]</scope>
    <source>
        <strain>SL254</strain>
    </source>
</reference>
<proteinExistence type="inferred from homology"/>
<accession>B4SWU8</accession>
<protein>
    <recommendedName>
        <fullName evidence="1">7-cyano-7-deazaguanine synthase</fullName>
        <ecNumber evidence="1">6.3.4.20</ecNumber>
    </recommendedName>
    <alternativeName>
        <fullName evidence="1">7-cyano-7-carbaguanine synthase</fullName>
    </alternativeName>
    <alternativeName>
        <fullName evidence="1">PreQ(0) synthase</fullName>
    </alternativeName>
    <alternativeName>
        <fullName evidence="1">Queuosine biosynthesis protein QueC</fullName>
    </alternativeName>
</protein>
<sequence>MKRAVVVFSGGQDSTTCLAQARHQYDEVHCVTFDYGQRHRAEIDVARDLALKLGARAHKVLDVTLLNELAVSSLTRDSIPVPDYEPNADGIPNTFVPGRNILFLTLAAIYAYQVKAEAVITGVCETDFSGYPDCRDEFVKALNHAVNLGMAKDIRFETPLMWIDKAETWALADYWGQLDLVREETLTCYNGIKGDGCGHCAACNLRANGLNHYLSNKAAVMAAMKQKTGLR</sequence>
<gene>
    <name evidence="1" type="primary">queC</name>
    <name type="ordered locus">SNSL254_A0504</name>
</gene>